<organism>
    <name type="scientific">Gloeothece citriformis (strain PCC 7424)</name>
    <name type="common">Cyanothece sp. (strain PCC 7424)</name>
    <dbReference type="NCBI Taxonomy" id="65393"/>
    <lineage>
        <taxon>Bacteria</taxon>
        <taxon>Bacillati</taxon>
        <taxon>Cyanobacteriota</taxon>
        <taxon>Cyanophyceae</taxon>
        <taxon>Oscillatoriophycideae</taxon>
        <taxon>Chroococcales</taxon>
        <taxon>Aphanothecaceae</taxon>
        <taxon>Gloeothece</taxon>
        <taxon>Gloeothece citriformis</taxon>
    </lineage>
</organism>
<sequence>MSRRKNIKKRPIPPDPVYNSYLINMTIRRVMRSGKKSLASNIIYDALKTVGERTGRDPLEVFEQAVKNATPLVEVKARRVGGATYQVPMEVRPGRGTTLALRWLIQFSRSRSGRTMAGKLANEIMDAANETGGAIKKREETHRMAEANKAFAHYRY</sequence>
<evidence type="ECO:0000255" key="1">
    <source>
        <dbReference type="HAMAP-Rule" id="MF_00480"/>
    </source>
</evidence>
<evidence type="ECO:0000305" key="2"/>
<gene>
    <name evidence="1" type="primary">rpsG</name>
    <name evidence="1" type="synonym">rps7</name>
    <name type="ordered locus">PCC7424_0051</name>
</gene>
<proteinExistence type="inferred from homology"/>
<protein>
    <recommendedName>
        <fullName evidence="1">Small ribosomal subunit protein uS7</fullName>
    </recommendedName>
    <alternativeName>
        <fullName evidence="2">30S ribosomal protein S7</fullName>
    </alternativeName>
</protein>
<comment type="function">
    <text evidence="1">One of the primary rRNA binding proteins, it binds directly to 16S rRNA where it nucleates assembly of the head domain of the 30S subunit. Is located at the subunit interface close to the decoding center, probably blocks exit of the E-site tRNA.</text>
</comment>
<comment type="subunit">
    <text evidence="1">Part of the 30S ribosomal subunit. Contacts proteins S9 and S11.</text>
</comment>
<comment type="similarity">
    <text evidence="1">Belongs to the universal ribosomal protein uS7 family.</text>
</comment>
<accession>B7K836</accession>
<dbReference type="EMBL" id="CP001291">
    <property type="protein sequence ID" value="ACK68524.1"/>
    <property type="molecule type" value="Genomic_DNA"/>
</dbReference>
<dbReference type="RefSeq" id="WP_012597475.1">
    <property type="nucleotide sequence ID" value="NC_011729.1"/>
</dbReference>
<dbReference type="SMR" id="B7K836"/>
<dbReference type="STRING" id="65393.PCC7424_0051"/>
<dbReference type="KEGG" id="cyc:PCC7424_0051"/>
<dbReference type="eggNOG" id="COG0049">
    <property type="taxonomic scope" value="Bacteria"/>
</dbReference>
<dbReference type="HOGENOM" id="CLU_072226_1_1_3"/>
<dbReference type="OrthoDB" id="9807653at2"/>
<dbReference type="Proteomes" id="UP000002384">
    <property type="component" value="Chromosome"/>
</dbReference>
<dbReference type="GO" id="GO:0015935">
    <property type="term" value="C:small ribosomal subunit"/>
    <property type="evidence" value="ECO:0007669"/>
    <property type="project" value="InterPro"/>
</dbReference>
<dbReference type="GO" id="GO:0019843">
    <property type="term" value="F:rRNA binding"/>
    <property type="evidence" value="ECO:0007669"/>
    <property type="project" value="UniProtKB-UniRule"/>
</dbReference>
<dbReference type="GO" id="GO:0003735">
    <property type="term" value="F:structural constituent of ribosome"/>
    <property type="evidence" value="ECO:0007669"/>
    <property type="project" value="InterPro"/>
</dbReference>
<dbReference type="GO" id="GO:0000049">
    <property type="term" value="F:tRNA binding"/>
    <property type="evidence" value="ECO:0007669"/>
    <property type="project" value="UniProtKB-UniRule"/>
</dbReference>
<dbReference type="GO" id="GO:0006412">
    <property type="term" value="P:translation"/>
    <property type="evidence" value="ECO:0007669"/>
    <property type="project" value="UniProtKB-UniRule"/>
</dbReference>
<dbReference type="CDD" id="cd14871">
    <property type="entry name" value="uS7_Chloroplast"/>
    <property type="match status" value="1"/>
</dbReference>
<dbReference type="FunFam" id="1.10.455.10:FF:000001">
    <property type="entry name" value="30S ribosomal protein S7"/>
    <property type="match status" value="1"/>
</dbReference>
<dbReference type="Gene3D" id="1.10.455.10">
    <property type="entry name" value="Ribosomal protein S7 domain"/>
    <property type="match status" value="1"/>
</dbReference>
<dbReference type="HAMAP" id="MF_00480_B">
    <property type="entry name" value="Ribosomal_uS7_B"/>
    <property type="match status" value="1"/>
</dbReference>
<dbReference type="InterPro" id="IPR000235">
    <property type="entry name" value="Ribosomal_uS7"/>
</dbReference>
<dbReference type="InterPro" id="IPR005717">
    <property type="entry name" value="Ribosomal_uS7_bac/org-type"/>
</dbReference>
<dbReference type="InterPro" id="IPR020606">
    <property type="entry name" value="Ribosomal_uS7_CS"/>
</dbReference>
<dbReference type="InterPro" id="IPR023798">
    <property type="entry name" value="Ribosomal_uS7_dom"/>
</dbReference>
<dbReference type="InterPro" id="IPR036823">
    <property type="entry name" value="Ribosomal_uS7_dom_sf"/>
</dbReference>
<dbReference type="NCBIfam" id="TIGR01029">
    <property type="entry name" value="rpsG_bact"/>
    <property type="match status" value="1"/>
</dbReference>
<dbReference type="PANTHER" id="PTHR11205">
    <property type="entry name" value="RIBOSOMAL PROTEIN S7"/>
    <property type="match status" value="1"/>
</dbReference>
<dbReference type="Pfam" id="PF00177">
    <property type="entry name" value="Ribosomal_S7"/>
    <property type="match status" value="1"/>
</dbReference>
<dbReference type="PIRSF" id="PIRSF002122">
    <property type="entry name" value="RPS7p_RPS7a_RPS5e_RPS7o"/>
    <property type="match status" value="1"/>
</dbReference>
<dbReference type="SUPFAM" id="SSF47973">
    <property type="entry name" value="Ribosomal protein S7"/>
    <property type="match status" value="1"/>
</dbReference>
<dbReference type="PROSITE" id="PS00052">
    <property type="entry name" value="RIBOSOMAL_S7"/>
    <property type="match status" value="1"/>
</dbReference>
<feature type="chain" id="PRO_1000125927" description="Small ribosomal subunit protein uS7">
    <location>
        <begin position="1"/>
        <end position="156"/>
    </location>
</feature>
<keyword id="KW-1185">Reference proteome</keyword>
<keyword id="KW-0687">Ribonucleoprotein</keyword>
<keyword id="KW-0689">Ribosomal protein</keyword>
<keyword id="KW-0694">RNA-binding</keyword>
<keyword id="KW-0699">rRNA-binding</keyword>
<keyword id="KW-0820">tRNA-binding</keyword>
<reference key="1">
    <citation type="journal article" date="2011" name="MBio">
        <title>Novel metabolic attributes of the genus Cyanothece, comprising a group of unicellular nitrogen-fixing Cyanobacteria.</title>
        <authorList>
            <person name="Bandyopadhyay A."/>
            <person name="Elvitigala T."/>
            <person name="Welsh E."/>
            <person name="Stockel J."/>
            <person name="Liberton M."/>
            <person name="Min H."/>
            <person name="Sherman L.A."/>
            <person name="Pakrasi H.B."/>
        </authorList>
    </citation>
    <scope>NUCLEOTIDE SEQUENCE [LARGE SCALE GENOMIC DNA]</scope>
    <source>
        <strain>PCC 7424</strain>
    </source>
</reference>
<name>RS7_GLOC7</name>